<protein>
    <recommendedName>
        <fullName>Myb/SANT-like DNA-binding domain-containing protein 1</fullName>
    </recommendedName>
</protein>
<accession>Q8BIL2</accession>
<reference key="1">
    <citation type="journal article" date="2005" name="Science">
        <title>The transcriptional landscape of the mammalian genome.</title>
        <authorList>
            <person name="Carninci P."/>
            <person name="Kasukawa T."/>
            <person name="Katayama S."/>
            <person name="Gough J."/>
            <person name="Frith M.C."/>
            <person name="Maeda N."/>
            <person name="Oyama R."/>
            <person name="Ravasi T."/>
            <person name="Lenhard B."/>
            <person name="Wells C."/>
            <person name="Kodzius R."/>
            <person name="Shimokawa K."/>
            <person name="Bajic V.B."/>
            <person name="Brenner S.E."/>
            <person name="Batalov S."/>
            <person name="Forrest A.R."/>
            <person name="Zavolan M."/>
            <person name="Davis M.J."/>
            <person name="Wilming L.G."/>
            <person name="Aidinis V."/>
            <person name="Allen J.E."/>
            <person name="Ambesi-Impiombato A."/>
            <person name="Apweiler R."/>
            <person name="Aturaliya R.N."/>
            <person name="Bailey T.L."/>
            <person name="Bansal M."/>
            <person name="Baxter L."/>
            <person name="Beisel K.W."/>
            <person name="Bersano T."/>
            <person name="Bono H."/>
            <person name="Chalk A.M."/>
            <person name="Chiu K.P."/>
            <person name="Choudhary V."/>
            <person name="Christoffels A."/>
            <person name="Clutterbuck D.R."/>
            <person name="Crowe M.L."/>
            <person name="Dalla E."/>
            <person name="Dalrymple B.P."/>
            <person name="de Bono B."/>
            <person name="Della Gatta G."/>
            <person name="di Bernardo D."/>
            <person name="Down T."/>
            <person name="Engstrom P."/>
            <person name="Fagiolini M."/>
            <person name="Faulkner G."/>
            <person name="Fletcher C.F."/>
            <person name="Fukushima T."/>
            <person name="Furuno M."/>
            <person name="Futaki S."/>
            <person name="Gariboldi M."/>
            <person name="Georgii-Hemming P."/>
            <person name="Gingeras T.R."/>
            <person name="Gojobori T."/>
            <person name="Green R.E."/>
            <person name="Gustincich S."/>
            <person name="Harbers M."/>
            <person name="Hayashi Y."/>
            <person name="Hensch T.K."/>
            <person name="Hirokawa N."/>
            <person name="Hill D."/>
            <person name="Huminiecki L."/>
            <person name="Iacono M."/>
            <person name="Ikeo K."/>
            <person name="Iwama A."/>
            <person name="Ishikawa T."/>
            <person name="Jakt M."/>
            <person name="Kanapin A."/>
            <person name="Katoh M."/>
            <person name="Kawasawa Y."/>
            <person name="Kelso J."/>
            <person name="Kitamura H."/>
            <person name="Kitano H."/>
            <person name="Kollias G."/>
            <person name="Krishnan S.P."/>
            <person name="Kruger A."/>
            <person name="Kummerfeld S.K."/>
            <person name="Kurochkin I.V."/>
            <person name="Lareau L.F."/>
            <person name="Lazarevic D."/>
            <person name="Lipovich L."/>
            <person name="Liu J."/>
            <person name="Liuni S."/>
            <person name="McWilliam S."/>
            <person name="Madan Babu M."/>
            <person name="Madera M."/>
            <person name="Marchionni L."/>
            <person name="Matsuda H."/>
            <person name="Matsuzawa S."/>
            <person name="Miki H."/>
            <person name="Mignone F."/>
            <person name="Miyake S."/>
            <person name="Morris K."/>
            <person name="Mottagui-Tabar S."/>
            <person name="Mulder N."/>
            <person name="Nakano N."/>
            <person name="Nakauchi H."/>
            <person name="Ng P."/>
            <person name="Nilsson R."/>
            <person name="Nishiguchi S."/>
            <person name="Nishikawa S."/>
            <person name="Nori F."/>
            <person name="Ohara O."/>
            <person name="Okazaki Y."/>
            <person name="Orlando V."/>
            <person name="Pang K.C."/>
            <person name="Pavan W.J."/>
            <person name="Pavesi G."/>
            <person name="Pesole G."/>
            <person name="Petrovsky N."/>
            <person name="Piazza S."/>
            <person name="Reed J."/>
            <person name="Reid J.F."/>
            <person name="Ring B.Z."/>
            <person name="Ringwald M."/>
            <person name="Rost B."/>
            <person name="Ruan Y."/>
            <person name="Salzberg S.L."/>
            <person name="Sandelin A."/>
            <person name="Schneider C."/>
            <person name="Schoenbach C."/>
            <person name="Sekiguchi K."/>
            <person name="Semple C.A."/>
            <person name="Seno S."/>
            <person name="Sessa L."/>
            <person name="Sheng Y."/>
            <person name="Shibata Y."/>
            <person name="Shimada H."/>
            <person name="Shimada K."/>
            <person name="Silva D."/>
            <person name="Sinclair B."/>
            <person name="Sperling S."/>
            <person name="Stupka E."/>
            <person name="Sugiura K."/>
            <person name="Sultana R."/>
            <person name="Takenaka Y."/>
            <person name="Taki K."/>
            <person name="Tammoja K."/>
            <person name="Tan S.L."/>
            <person name="Tang S."/>
            <person name="Taylor M.S."/>
            <person name="Tegner J."/>
            <person name="Teichmann S.A."/>
            <person name="Ueda H.R."/>
            <person name="van Nimwegen E."/>
            <person name="Verardo R."/>
            <person name="Wei C.L."/>
            <person name="Yagi K."/>
            <person name="Yamanishi H."/>
            <person name="Zabarovsky E."/>
            <person name="Zhu S."/>
            <person name="Zimmer A."/>
            <person name="Hide W."/>
            <person name="Bult C."/>
            <person name="Grimmond S.M."/>
            <person name="Teasdale R.D."/>
            <person name="Liu E.T."/>
            <person name="Brusic V."/>
            <person name="Quackenbush J."/>
            <person name="Wahlestedt C."/>
            <person name="Mattick J.S."/>
            <person name="Hume D.A."/>
            <person name="Kai C."/>
            <person name="Sasaki D."/>
            <person name="Tomaru Y."/>
            <person name="Fukuda S."/>
            <person name="Kanamori-Katayama M."/>
            <person name="Suzuki M."/>
            <person name="Aoki J."/>
            <person name="Arakawa T."/>
            <person name="Iida J."/>
            <person name="Imamura K."/>
            <person name="Itoh M."/>
            <person name="Kato T."/>
            <person name="Kawaji H."/>
            <person name="Kawagashira N."/>
            <person name="Kawashima T."/>
            <person name="Kojima M."/>
            <person name="Kondo S."/>
            <person name="Konno H."/>
            <person name="Nakano K."/>
            <person name="Ninomiya N."/>
            <person name="Nishio T."/>
            <person name="Okada M."/>
            <person name="Plessy C."/>
            <person name="Shibata K."/>
            <person name="Shiraki T."/>
            <person name="Suzuki S."/>
            <person name="Tagami M."/>
            <person name="Waki K."/>
            <person name="Watahiki A."/>
            <person name="Okamura-Oho Y."/>
            <person name="Suzuki H."/>
            <person name="Kawai J."/>
            <person name="Hayashizaki Y."/>
        </authorList>
    </citation>
    <scope>NUCLEOTIDE SEQUENCE [LARGE SCALE MRNA]</scope>
    <source>
        <strain>C57BL/6J</strain>
        <tissue>Retina</tissue>
    </source>
</reference>
<reference key="2">
    <citation type="journal article" date="2004" name="Genome Res.">
        <title>The status, quality, and expansion of the NIH full-length cDNA project: the Mammalian Gene Collection (MGC).</title>
        <authorList>
            <consortium name="The MGC Project Team"/>
        </authorList>
    </citation>
    <scope>NUCLEOTIDE SEQUENCE [LARGE SCALE MRNA]</scope>
    <source>
        <tissue>Brain</tissue>
    </source>
</reference>
<dbReference type="EMBL" id="AK044284">
    <property type="protein sequence ID" value="BAC31855.1"/>
    <property type="molecule type" value="mRNA"/>
</dbReference>
<dbReference type="EMBL" id="BC116928">
    <property type="protein sequence ID" value="AAI16929.1"/>
    <property type="molecule type" value="mRNA"/>
</dbReference>
<dbReference type="EMBL" id="BC116930">
    <property type="protein sequence ID" value="AAI16931.1"/>
    <property type="molecule type" value="mRNA"/>
</dbReference>
<dbReference type="CCDS" id="CCDS19221.1"/>
<dbReference type="RefSeq" id="NP_001297479.1">
    <property type="nucleotide sequence ID" value="NM_001310550.1"/>
</dbReference>
<dbReference type="RefSeq" id="NP_997160.1">
    <property type="nucleotide sequence ID" value="NM_207277.1"/>
</dbReference>
<dbReference type="SMR" id="Q8BIL2"/>
<dbReference type="FunCoup" id="Q8BIL2">
    <property type="interactions" value="398"/>
</dbReference>
<dbReference type="STRING" id="10090.ENSMUSP00000057362"/>
<dbReference type="iPTMnet" id="Q8BIL2"/>
<dbReference type="PhosphoSitePlus" id="Q8BIL2"/>
<dbReference type="PaxDb" id="10090-ENSMUSP00000057362"/>
<dbReference type="PeptideAtlas" id="Q8BIL2"/>
<dbReference type="ProteomicsDB" id="291417"/>
<dbReference type="Antibodypedia" id="57468">
    <property type="antibodies" value="46 antibodies from 9 providers"/>
</dbReference>
<dbReference type="Ensembl" id="ENSMUST00000050535.2">
    <property type="protein sequence ID" value="ENSMUSP00000057362.2"/>
    <property type="gene ID" value="ENSMUSG00000051246.4"/>
</dbReference>
<dbReference type="GeneID" id="403174"/>
<dbReference type="KEGG" id="mmu:403174"/>
<dbReference type="UCSC" id="uc008xde.1">
    <property type="organism name" value="mouse"/>
</dbReference>
<dbReference type="AGR" id="MGI:2684990"/>
<dbReference type="CTD" id="345222"/>
<dbReference type="MGI" id="MGI:2684990">
    <property type="gene designation" value="Msantd1"/>
</dbReference>
<dbReference type="VEuPathDB" id="HostDB:ENSMUSG00000051246"/>
<dbReference type="eggNOG" id="KOG4282">
    <property type="taxonomic scope" value="Eukaryota"/>
</dbReference>
<dbReference type="GeneTree" id="ENSGT00390000002245"/>
<dbReference type="HOGENOM" id="CLU_086694_0_0_1"/>
<dbReference type="InParanoid" id="Q8BIL2"/>
<dbReference type="OMA" id="FQFRRLK"/>
<dbReference type="OrthoDB" id="6081971at2759"/>
<dbReference type="PhylomeDB" id="Q8BIL2"/>
<dbReference type="TreeFam" id="TF331923"/>
<dbReference type="BioGRID-ORCS" id="403174">
    <property type="hits" value="1 hit in 76 CRISPR screens"/>
</dbReference>
<dbReference type="PRO" id="PR:Q8BIL2"/>
<dbReference type="Proteomes" id="UP000000589">
    <property type="component" value="Chromosome 5"/>
</dbReference>
<dbReference type="RNAct" id="Q8BIL2">
    <property type="molecule type" value="protein"/>
</dbReference>
<dbReference type="Bgee" id="ENSMUSG00000051246">
    <property type="expression patterns" value="Expressed in retinal neural layer and 62 other cell types or tissues"/>
</dbReference>
<dbReference type="ExpressionAtlas" id="Q8BIL2">
    <property type="expression patterns" value="baseline and differential"/>
</dbReference>
<dbReference type="FunFam" id="1.10.10.60:FF:000135">
    <property type="entry name" value="Myb/SANT-like DNA-binding domain containing 1"/>
    <property type="match status" value="1"/>
</dbReference>
<dbReference type="Gene3D" id="1.10.10.60">
    <property type="entry name" value="Homeodomain-like"/>
    <property type="match status" value="1"/>
</dbReference>
<dbReference type="InterPro" id="IPR026095">
    <property type="entry name" value="Myb/SANT-like_DNA-bd_dom_prot"/>
</dbReference>
<dbReference type="InterPro" id="IPR044822">
    <property type="entry name" value="Myb_DNA-bind_4"/>
</dbReference>
<dbReference type="PANTHER" id="PTHR22666">
    <property type="entry name" value="MYB_SANT-LIKE DNA-BINDING DOMAIN-CONTAINING PROTEIN 1"/>
    <property type="match status" value="1"/>
</dbReference>
<dbReference type="PANTHER" id="PTHR22666:SF3">
    <property type="entry name" value="MYB_SANT-LIKE DNA-BINDING DOMAIN-CONTAINING PROTEIN 1"/>
    <property type="match status" value="1"/>
</dbReference>
<dbReference type="Pfam" id="PF13837">
    <property type="entry name" value="Myb_DNA-bind_4"/>
    <property type="match status" value="1"/>
</dbReference>
<gene>
    <name type="primary">Msantd1</name>
</gene>
<evidence type="ECO:0000256" key="1">
    <source>
        <dbReference type="SAM" id="MobiDB-lite"/>
    </source>
</evidence>
<feature type="chain" id="PRO_0000321820" description="Myb/SANT-like DNA-binding domain-containing protein 1">
    <location>
        <begin position="1"/>
        <end position="278"/>
    </location>
</feature>
<feature type="domain" description="Myb-like">
    <location>
        <begin position="44"/>
        <end position="131"/>
    </location>
</feature>
<feature type="region of interest" description="Disordered" evidence="1">
    <location>
        <begin position="139"/>
        <end position="167"/>
    </location>
</feature>
<feature type="compositionally biased region" description="Polar residues" evidence="1">
    <location>
        <begin position="149"/>
        <end position="166"/>
    </location>
</feature>
<keyword id="KW-1185">Reference proteome</keyword>
<sequence>MVRWPGLRPCLSAILNPAGASNMAAAEVPGYLVSPQTEKHRRARNWTDAEMRGLMLVWEEFFDELKQTKRNAKVYEKMASKLFEMTGERRLGEEIKIKITNMTFQYRKLKCMTDSESIPPDWPYYLAIDRILAKVPESCEGKLPDGQQPGPSTSQTEASLSPSAKSTPLYLPYTQCSYEGHFEDDRSDSSSSLLSLKFRSEERPVKKRKMRSCHLQKKKLRLLEAMLEEQRRLSRAMEETCREVRRVLDQQNILQVQSLQLQERMMSLLEKIIAKSNV</sequence>
<organism>
    <name type="scientific">Mus musculus</name>
    <name type="common">Mouse</name>
    <dbReference type="NCBI Taxonomy" id="10090"/>
    <lineage>
        <taxon>Eukaryota</taxon>
        <taxon>Metazoa</taxon>
        <taxon>Chordata</taxon>
        <taxon>Craniata</taxon>
        <taxon>Vertebrata</taxon>
        <taxon>Euteleostomi</taxon>
        <taxon>Mammalia</taxon>
        <taxon>Eutheria</taxon>
        <taxon>Euarchontoglires</taxon>
        <taxon>Glires</taxon>
        <taxon>Rodentia</taxon>
        <taxon>Myomorpha</taxon>
        <taxon>Muroidea</taxon>
        <taxon>Muridae</taxon>
        <taxon>Murinae</taxon>
        <taxon>Mus</taxon>
        <taxon>Mus</taxon>
    </lineage>
</organism>
<proteinExistence type="evidence at transcript level"/>
<name>MSD1_MOUSE</name>